<reference key="1">
    <citation type="journal article" date="2001" name="Nature">
        <title>Genome sequence of enterohaemorrhagic Escherichia coli O157:H7.</title>
        <authorList>
            <person name="Perna N.T."/>
            <person name="Plunkett G. III"/>
            <person name="Burland V."/>
            <person name="Mau B."/>
            <person name="Glasner J.D."/>
            <person name="Rose D.J."/>
            <person name="Mayhew G.F."/>
            <person name="Evans P.S."/>
            <person name="Gregor J."/>
            <person name="Kirkpatrick H.A."/>
            <person name="Posfai G."/>
            <person name="Hackett J."/>
            <person name="Klink S."/>
            <person name="Boutin A."/>
            <person name="Shao Y."/>
            <person name="Miller L."/>
            <person name="Grotbeck E.J."/>
            <person name="Davis N.W."/>
            <person name="Lim A."/>
            <person name="Dimalanta E.T."/>
            <person name="Potamousis K."/>
            <person name="Apodaca J."/>
            <person name="Anantharaman T.S."/>
            <person name="Lin J."/>
            <person name="Yen G."/>
            <person name="Schwartz D.C."/>
            <person name="Welch R.A."/>
            <person name="Blattner F.R."/>
        </authorList>
    </citation>
    <scope>NUCLEOTIDE SEQUENCE [LARGE SCALE GENOMIC DNA]</scope>
    <source>
        <strain>O157:H7 / EDL933 / ATCC 700927 / EHEC</strain>
    </source>
</reference>
<reference key="2">
    <citation type="journal article" date="2001" name="DNA Res.">
        <title>Complete genome sequence of enterohemorrhagic Escherichia coli O157:H7 and genomic comparison with a laboratory strain K-12.</title>
        <authorList>
            <person name="Hayashi T."/>
            <person name="Makino K."/>
            <person name="Ohnishi M."/>
            <person name="Kurokawa K."/>
            <person name="Ishii K."/>
            <person name="Yokoyama K."/>
            <person name="Han C.-G."/>
            <person name="Ohtsubo E."/>
            <person name="Nakayama K."/>
            <person name="Murata T."/>
            <person name="Tanaka M."/>
            <person name="Tobe T."/>
            <person name="Iida T."/>
            <person name="Takami H."/>
            <person name="Honda T."/>
            <person name="Sasakawa C."/>
            <person name="Ogasawara N."/>
            <person name="Yasunaga T."/>
            <person name="Kuhara S."/>
            <person name="Shiba T."/>
            <person name="Hattori M."/>
            <person name="Shinagawa H."/>
        </authorList>
    </citation>
    <scope>NUCLEOTIDE SEQUENCE [LARGE SCALE GENOMIC DNA]</scope>
    <source>
        <strain>O157:H7 / Sakai / RIMD 0509952 / EHEC</strain>
    </source>
</reference>
<feature type="chain" id="PRO_0000215708" description="ATP-dependent Clp protease adapter protein ClpS">
    <location>
        <begin position="1"/>
        <end position="106"/>
    </location>
</feature>
<name>CLPS_ECO57</name>
<sequence length="106" mass="12179">MGKTNDWLDFDQLAEEKVRDALKPPSMYKVILVNDDYTPMEFVIDVLQKFFSYDVERATQLMLAVHYQGKAICGVFTAEVAETKVAMVNKYARENEHPLLCTLEKA</sequence>
<dbReference type="EMBL" id="AE005174">
    <property type="protein sequence ID" value="AAG55263.1"/>
    <property type="molecule type" value="Genomic_DNA"/>
</dbReference>
<dbReference type="EMBL" id="BA000007">
    <property type="protein sequence ID" value="BAB34390.1"/>
    <property type="molecule type" value="Genomic_DNA"/>
</dbReference>
<dbReference type="PIR" id="C85600">
    <property type="entry name" value="C85600"/>
</dbReference>
<dbReference type="PIR" id="G90749">
    <property type="entry name" value="G90749"/>
</dbReference>
<dbReference type="RefSeq" id="NP_308994.1">
    <property type="nucleotide sequence ID" value="NC_002695.1"/>
</dbReference>
<dbReference type="RefSeq" id="WP_000520781.1">
    <property type="nucleotide sequence ID" value="NZ_VOAI01000006.1"/>
</dbReference>
<dbReference type="SMR" id="P0A8Q8"/>
<dbReference type="STRING" id="155864.Z1118"/>
<dbReference type="GeneID" id="86863397"/>
<dbReference type="GeneID" id="917706"/>
<dbReference type="KEGG" id="ece:Z1118"/>
<dbReference type="KEGG" id="ecs:ECs_0967"/>
<dbReference type="PATRIC" id="fig|386585.9.peg.1083"/>
<dbReference type="eggNOG" id="COG2127">
    <property type="taxonomic scope" value="Bacteria"/>
</dbReference>
<dbReference type="HOGENOM" id="CLU_134358_2_1_6"/>
<dbReference type="OMA" id="DDFTPMD"/>
<dbReference type="Proteomes" id="UP000000558">
    <property type="component" value="Chromosome"/>
</dbReference>
<dbReference type="Proteomes" id="UP000002519">
    <property type="component" value="Chromosome"/>
</dbReference>
<dbReference type="GO" id="GO:0030163">
    <property type="term" value="P:protein catabolic process"/>
    <property type="evidence" value="ECO:0007669"/>
    <property type="project" value="InterPro"/>
</dbReference>
<dbReference type="GO" id="GO:0006508">
    <property type="term" value="P:proteolysis"/>
    <property type="evidence" value="ECO:0007669"/>
    <property type="project" value="UniProtKB-UniRule"/>
</dbReference>
<dbReference type="FunFam" id="3.30.1390.10:FF:000002">
    <property type="entry name" value="ATP-dependent Clp protease adapter protein ClpS"/>
    <property type="match status" value="1"/>
</dbReference>
<dbReference type="Gene3D" id="3.30.1390.10">
    <property type="match status" value="1"/>
</dbReference>
<dbReference type="HAMAP" id="MF_00302">
    <property type="entry name" value="ClpS"/>
    <property type="match status" value="1"/>
</dbReference>
<dbReference type="InterPro" id="IPR022935">
    <property type="entry name" value="ClpS"/>
</dbReference>
<dbReference type="InterPro" id="IPR003769">
    <property type="entry name" value="ClpS_core"/>
</dbReference>
<dbReference type="InterPro" id="IPR014719">
    <property type="entry name" value="Ribosomal_bL12_C/ClpS-like"/>
</dbReference>
<dbReference type="NCBIfam" id="NF000670">
    <property type="entry name" value="PRK00033.1-3"/>
    <property type="match status" value="1"/>
</dbReference>
<dbReference type="NCBIfam" id="NF000672">
    <property type="entry name" value="PRK00033.1-5"/>
    <property type="match status" value="1"/>
</dbReference>
<dbReference type="PANTHER" id="PTHR33473:SF19">
    <property type="entry name" value="ATP-DEPENDENT CLP PROTEASE ADAPTER PROTEIN CLPS"/>
    <property type="match status" value="1"/>
</dbReference>
<dbReference type="PANTHER" id="PTHR33473">
    <property type="entry name" value="ATP-DEPENDENT CLP PROTEASE ADAPTER PROTEIN CLPS1, CHLOROPLASTIC"/>
    <property type="match status" value="1"/>
</dbReference>
<dbReference type="Pfam" id="PF02617">
    <property type="entry name" value="ClpS"/>
    <property type="match status" value="1"/>
</dbReference>
<dbReference type="SUPFAM" id="SSF54736">
    <property type="entry name" value="ClpS-like"/>
    <property type="match status" value="1"/>
</dbReference>
<keyword id="KW-1185">Reference proteome</keyword>
<evidence type="ECO:0000255" key="1">
    <source>
        <dbReference type="HAMAP-Rule" id="MF_00302"/>
    </source>
</evidence>
<gene>
    <name evidence="1" type="primary">clpS</name>
    <name type="ordered locus">Z1118</name>
    <name type="ordered locus">ECs0967</name>
</gene>
<protein>
    <recommendedName>
        <fullName evidence="1">ATP-dependent Clp protease adapter protein ClpS</fullName>
    </recommendedName>
</protein>
<proteinExistence type="inferred from homology"/>
<comment type="function">
    <text evidence="1">Involved in the modulation of the specificity of the ClpAP-mediated ATP-dependent protein degradation.</text>
</comment>
<comment type="subunit">
    <text evidence="1">Binds to the N-terminal domain of the chaperone ClpA.</text>
</comment>
<comment type="similarity">
    <text evidence="1">Belongs to the ClpS family.</text>
</comment>
<accession>P0A8Q8</accession>
<accession>P75832</accession>
<organism>
    <name type="scientific">Escherichia coli O157:H7</name>
    <dbReference type="NCBI Taxonomy" id="83334"/>
    <lineage>
        <taxon>Bacteria</taxon>
        <taxon>Pseudomonadati</taxon>
        <taxon>Pseudomonadota</taxon>
        <taxon>Gammaproteobacteria</taxon>
        <taxon>Enterobacterales</taxon>
        <taxon>Enterobacteriaceae</taxon>
        <taxon>Escherichia</taxon>
    </lineage>
</organism>